<comment type="function">
    <text evidence="1 2 4 5 6 7">Fatty acyl-coenzyme A (CoA) diphosphatase that hydrolyzes fatty acyl-CoA to yield acyl-4'-phosphopantetheine and adenosine 3',5'-bisphosphate (By similarity). Preferentially hydrolyzes unsaturated long-chain acyl-CoA substrates in the endoplasmic reticulum (ER) lumen (By similarity). This catalytic activity is required for maintaining ER structure and for lipid droplets (LDs) biogenesis, which are lipid storage organelles involved in maintaining lipid and energy homeostasis (By similarity) (PubMed:26504167). May directly bind to diacylglycerol (DAGs) and triacylglycerol, which is also important for LD biogenesis (By similarity). May support directional budding of nacent LDs from the ER into the cytosol by reducing DAG levels at sites of LD formation (By similarity) (PubMed:29526591). May play a role in the regulation of cell morphology and cytoskeletal organization (By similarity). Involved in phospholipid biosynthesis (By similarity) (PubMed:29417057).</text>
</comment>
<comment type="catalytic activity">
    <reaction evidence="4">
        <text>an acyl-CoA + H2O = an acyl-4'-phosphopantetheine + adenosine 3',5'-bisphosphate + 2 H(+)</text>
        <dbReference type="Rhea" id="RHEA:50044"/>
        <dbReference type="ChEBI" id="CHEBI:15377"/>
        <dbReference type="ChEBI" id="CHEBI:15378"/>
        <dbReference type="ChEBI" id="CHEBI:58342"/>
        <dbReference type="ChEBI" id="CHEBI:58343"/>
        <dbReference type="ChEBI" id="CHEBI:132023"/>
    </reaction>
    <physiologicalReaction direction="left-to-right" evidence="4">
        <dbReference type="Rhea" id="RHEA:50045"/>
    </physiologicalReaction>
</comment>
<comment type="catalytic activity">
    <reaction evidence="4">
        <text>(9Z)-octadecenoyl-CoA + H2O = S-(9Z-octadecenoyl)-4'-phosphopantetheine + adenosine 3',5'-bisphosphate + 2 H(+)</text>
        <dbReference type="Rhea" id="RHEA:65564"/>
        <dbReference type="ChEBI" id="CHEBI:15377"/>
        <dbReference type="ChEBI" id="CHEBI:15378"/>
        <dbReference type="ChEBI" id="CHEBI:57387"/>
        <dbReference type="ChEBI" id="CHEBI:58343"/>
        <dbReference type="ChEBI" id="CHEBI:156553"/>
    </reaction>
    <physiologicalReaction direction="left-to-right" evidence="4">
        <dbReference type="Rhea" id="RHEA:65565"/>
    </physiologicalReaction>
</comment>
<comment type="catalytic activity">
    <reaction evidence="4">
        <text>(5Z,8Z,11Z,14Z)-eicosatetraenoyl-CoA + H2O = S-(5Z,8Z,11Z,14Z-eicosatetraenoyl)-4'-phosphopantetheine + adenosine 3',5'-bisphosphate + 2 H(+)</text>
        <dbReference type="Rhea" id="RHEA:65568"/>
        <dbReference type="ChEBI" id="CHEBI:15377"/>
        <dbReference type="ChEBI" id="CHEBI:15378"/>
        <dbReference type="ChEBI" id="CHEBI:57368"/>
        <dbReference type="ChEBI" id="CHEBI:58343"/>
        <dbReference type="ChEBI" id="CHEBI:156554"/>
    </reaction>
    <physiologicalReaction direction="left-to-right" evidence="4">
        <dbReference type="Rhea" id="RHEA:65569"/>
    </physiologicalReaction>
</comment>
<comment type="catalytic activity">
    <reaction evidence="4">
        <text>hexadecanoyl-CoA + H2O = S-hexadecanoyl-4'-phosphopantetheine + adenosine 3',5'-bisphosphate + 2 H(+)</text>
        <dbReference type="Rhea" id="RHEA:50032"/>
        <dbReference type="ChEBI" id="CHEBI:15377"/>
        <dbReference type="ChEBI" id="CHEBI:15378"/>
        <dbReference type="ChEBI" id="CHEBI:57379"/>
        <dbReference type="ChEBI" id="CHEBI:58343"/>
        <dbReference type="ChEBI" id="CHEBI:132018"/>
    </reaction>
    <physiologicalReaction direction="left-to-right" evidence="4">
        <dbReference type="Rhea" id="RHEA:50033"/>
    </physiologicalReaction>
</comment>
<comment type="subcellular location">
    <subcellularLocation>
        <location evidence="4 5 7">Endoplasmic reticulum membrane</location>
        <topology evidence="4">Multi-pass membrane protein</topology>
    </subcellularLocation>
    <subcellularLocation>
        <location evidence="6">Vacuole</location>
    </subcellularLocation>
    <text evidence="7">Enriched at sites of lipid droplet (LD) biogenesis.</text>
</comment>
<comment type="similarity">
    <text evidence="4">Belongs to the FIT family. Yeast FIT2A/YFT2 subfamily.</text>
</comment>
<proteinExistence type="evidence at protein level"/>
<name>YFT2_YEAST</name>
<dbReference type="EC" id="3.6.1.-" evidence="4"/>
<dbReference type="EMBL" id="U32517">
    <property type="protein sequence ID" value="AAB64755.1"/>
    <property type="molecule type" value="Genomic_DNA"/>
</dbReference>
<dbReference type="EMBL" id="BK006938">
    <property type="protein sequence ID" value="DAA12160.1"/>
    <property type="molecule type" value="Genomic_DNA"/>
</dbReference>
<dbReference type="PIR" id="S59785">
    <property type="entry name" value="S59785"/>
</dbReference>
<dbReference type="RefSeq" id="NP_010605.1">
    <property type="nucleotide sequence ID" value="NM_001180627.1"/>
</dbReference>
<dbReference type="SMR" id="Q06676"/>
<dbReference type="BioGRID" id="32375">
    <property type="interactions" value="59"/>
</dbReference>
<dbReference type="DIP" id="DIP-4731N"/>
<dbReference type="FunCoup" id="Q06676">
    <property type="interactions" value="55"/>
</dbReference>
<dbReference type="IntAct" id="Q06676">
    <property type="interactions" value="1"/>
</dbReference>
<dbReference type="STRING" id="4932.YDR319C"/>
<dbReference type="PaxDb" id="4932-YDR319C"/>
<dbReference type="PeptideAtlas" id="Q06676"/>
<dbReference type="EnsemblFungi" id="YDR319C_mRNA">
    <property type="protein sequence ID" value="YDR319C"/>
    <property type="gene ID" value="YDR319C"/>
</dbReference>
<dbReference type="GeneID" id="851917"/>
<dbReference type="KEGG" id="sce:YDR319C"/>
<dbReference type="AGR" id="SGD:S000002727"/>
<dbReference type="SGD" id="S000002727">
    <property type="gene designation" value="YFT2"/>
</dbReference>
<dbReference type="VEuPathDB" id="FungiDB:YDR319C"/>
<dbReference type="eggNOG" id="KOG3750">
    <property type="taxonomic scope" value="Eukaryota"/>
</dbReference>
<dbReference type="GeneTree" id="ENSGT00530000063693"/>
<dbReference type="HOGENOM" id="CLU_086757_0_0_1"/>
<dbReference type="InParanoid" id="Q06676"/>
<dbReference type="OMA" id="LILWCEL"/>
<dbReference type="OrthoDB" id="5579088at2759"/>
<dbReference type="BioCyc" id="YEAST:G3O-29877-MONOMER"/>
<dbReference type="Reactome" id="R-SCE-8964572">
    <property type="pathway name" value="Lipid particle organization"/>
</dbReference>
<dbReference type="PRO" id="PR:Q06676"/>
<dbReference type="Proteomes" id="UP000002311">
    <property type="component" value="Chromosome IV"/>
</dbReference>
<dbReference type="RNAct" id="Q06676">
    <property type="molecule type" value="protein"/>
</dbReference>
<dbReference type="GO" id="GO:0005783">
    <property type="term" value="C:endoplasmic reticulum"/>
    <property type="evidence" value="ECO:0000314"/>
    <property type="project" value="SGD"/>
</dbReference>
<dbReference type="GO" id="GO:0005788">
    <property type="term" value="C:endoplasmic reticulum lumen"/>
    <property type="evidence" value="ECO:0000315"/>
    <property type="project" value="UniProtKB"/>
</dbReference>
<dbReference type="GO" id="GO:0005789">
    <property type="term" value="C:endoplasmic reticulum membrane"/>
    <property type="evidence" value="ECO:0000314"/>
    <property type="project" value="UniProtKB"/>
</dbReference>
<dbReference type="GO" id="GO:0005773">
    <property type="term" value="C:vacuole"/>
    <property type="evidence" value="ECO:0007669"/>
    <property type="project" value="UniProtKB-SubCell"/>
</dbReference>
<dbReference type="GO" id="GO:0010945">
    <property type="term" value="F:coenzyme A diphosphatase activity"/>
    <property type="evidence" value="ECO:0000266"/>
    <property type="project" value="SGD"/>
</dbReference>
<dbReference type="GO" id="GO:0016818">
    <property type="term" value="F:hydrolase activity, acting on acid anhydrides, in phosphorus-containing anhydrides"/>
    <property type="evidence" value="ECO:0000250"/>
    <property type="project" value="UniProtKB"/>
</dbReference>
<dbReference type="GO" id="GO:0036115">
    <property type="term" value="P:fatty-acyl-CoA catabolic process"/>
    <property type="evidence" value="ECO:0000266"/>
    <property type="project" value="SGD"/>
</dbReference>
<dbReference type="GO" id="GO:0140042">
    <property type="term" value="P:lipid droplet formation"/>
    <property type="evidence" value="ECO:0000315"/>
    <property type="project" value="UniProtKB"/>
</dbReference>
<dbReference type="GO" id="GO:0034389">
    <property type="term" value="P:lipid droplet organization"/>
    <property type="evidence" value="ECO:0000318"/>
    <property type="project" value="GO_Central"/>
</dbReference>
<dbReference type="GO" id="GO:0019915">
    <property type="term" value="P:lipid storage"/>
    <property type="evidence" value="ECO:0000318"/>
    <property type="project" value="GO_Central"/>
</dbReference>
<dbReference type="GO" id="GO:0008654">
    <property type="term" value="P:phospholipid biosynthetic process"/>
    <property type="evidence" value="ECO:0000315"/>
    <property type="project" value="SGD"/>
</dbReference>
<dbReference type="HAMAP" id="MF_03232">
    <property type="entry name" value="YFT2"/>
    <property type="match status" value="1"/>
</dbReference>
<dbReference type="InterPro" id="IPR019388">
    <property type="entry name" value="FIT"/>
</dbReference>
<dbReference type="InterPro" id="IPR046398">
    <property type="entry name" value="YFT2"/>
</dbReference>
<dbReference type="PANTHER" id="PTHR23129">
    <property type="entry name" value="ACYL-COENZYME A DIPHOSPHATASE FITM2"/>
    <property type="match status" value="1"/>
</dbReference>
<dbReference type="PANTHER" id="PTHR23129:SF0">
    <property type="entry name" value="ACYL-COENZYME A DIPHOSPHATASE FITM2"/>
    <property type="match status" value="1"/>
</dbReference>
<dbReference type="Pfam" id="PF10261">
    <property type="entry name" value="FIT"/>
    <property type="match status" value="1"/>
</dbReference>
<keyword id="KW-0256">Endoplasmic reticulum</keyword>
<keyword id="KW-0378">Hydrolase</keyword>
<keyword id="KW-0444">Lipid biosynthesis</keyword>
<keyword id="KW-0443">Lipid metabolism</keyword>
<keyword id="KW-0472">Membrane</keyword>
<keyword id="KW-0594">Phospholipid biosynthesis</keyword>
<keyword id="KW-1208">Phospholipid metabolism</keyword>
<keyword id="KW-1185">Reference proteome</keyword>
<keyword id="KW-0812">Transmembrane</keyword>
<keyword id="KW-1133">Transmembrane helix</keyword>
<keyword id="KW-0926">Vacuole</keyword>
<feature type="chain" id="PRO_0000252273" description="Acyl-coenzyme A diphosphatase YFT2">
    <location>
        <begin position="1"/>
        <end position="274"/>
    </location>
</feature>
<feature type="topological domain" description="Cytoplasmic" evidence="9">
    <location>
        <begin position="1"/>
        <end position="11"/>
    </location>
</feature>
<feature type="transmembrane region" description="Helical" evidence="3">
    <location>
        <begin position="12"/>
        <end position="32"/>
    </location>
</feature>
<feature type="topological domain" description="Lumenal" evidence="9">
    <location>
        <begin position="33"/>
        <end position="60"/>
    </location>
</feature>
<feature type="transmembrane region" description="Helical" evidence="3">
    <location>
        <begin position="61"/>
        <end position="81"/>
    </location>
</feature>
<feature type="topological domain" description="Cytoplasmic" evidence="9">
    <location>
        <begin position="82"/>
        <end position="124"/>
    </location>
</feature>
<feature type="transmembrane region" description="Helical" evidence="3">
    <location>
        <begin position="125"/>
        <end position="145"/>
    </location>
</feature>
<feature type="topological domain" description="Lumenal" evidence="9">
    <location>
        <begin position="146"/>
        <end position="170"/>
    </location>
</feature>
<feature type="transmembrane region" description="Helical" evidence="3">
    <location>
        <begin position="171"/>
        <end position="191"/>
    </location>
</feature>
<feature type="topological domain" description="Cytoplasmic" evidence="9">
    <location>
        <begin position="192"/>
        <end position="215"/>
    </location>
</feature>
<feature type="transmembrane region" description="Helical" evidence="3">
    <location>
        <begin position="216"/>
        <end position="236"/>
    </location>
</feature>
<feature type="topological domain" description="Lumenal" evidence="9">
    <location>
        <begin position="237"/>
        <end position="247"/>
    </location>
</feature>
<feature type="transmembrane region" description="Helical" evidence="3">
    <location>
        <begin position="248"/>
        <end position="268"/>
    </location>
</feature>
<feature type="topological domain" description="Cytoplasmic" evidence="9">
    <location>
        <begin position="269"/>
        <end position="274"/>
    </location>
</feature>
<feature type="active site" evidence="4">
    <location>
        <position position="178"/>
    </location>
</feature>
<feature type="active site" evidence="4">
    <location>
        <position position="239"/>
    </location>
</feature>
<feature type="mutagenesis site" description="Inositol auxotrophy. Impaired ER morphology and aberrant lipid droplet (LD) budding." evidence="6">
    <original>H</original>
    <variation>A</variation>
    <location>
        <position position="178"/>
    </location>
</feature>
<feature type="mutagenesis site" description="Inositol auxotrophy. Impaired ER morphology and aberrant lipid droplet (LD) budding." evidence="6">
    <original>E</original>
    <variation>A</variation>
    <location>
        <position position="243"/>
    </location>
</feature>
<feature type="mutagenesis site" description="No defect in inositol biosynthesis." evidence="6">
    <original>E</original>
    <variation>D</variation>
    <location>
        <position position="243"/>
    </location>
</feature>
<gene>
    <name evidence="4 11" type="primary">YFT2</name>
    <name evidence="4 10" type="synonym">FIT2A</name>
    <name evidence="10" type="ordered locus">YDR319C</name>
</gene>
<protein>
    <recommendedName>
        <fullName evidence="4">Acyl-coenzyme A diphosphatase YFT2</fullName>
        <ecNumber evidence="4">3.6.1.-</ecNumber>
    </recommendedName>
    <alternativeName>
        <fullName evidence="4 8">FIT family protein YFT2</fullName>
    </alternativeName>
</protein>
<accession>Q06676</accession>
<accession>D6VSV0</accession>
<evidence type="ECO:0000250" key="1">
    <source>
        <dbReference type="UniProtKB" id="P59266"/>
    </source>
</evidence>
<evidence type="ECO:0000250" key="2">
    <source>
        <dbReference type="UniProtKB" id="Q8N6M3"/>
    </source>
</evidence>
<evidence type="ECO:0000255" key="3"/>
<evidence type="ECO:0000255" key="4">
    <source>
        <dbReference type="HAMAP-Rule" id="MF_03232"/>
    </source>
</evidence>
<evidence type="ECO:0000269" key="5">
    <source>
    </source>
</evidence>
<evidence type="ECO:0000269" key="6">
    <source>
    </source>
</evidence>
<evidence type="ECO:0000269" key="7">
    <source>
    </source>
</evidence>
<evidence type="ECO:0000303" key="8">
    <source>
    </source>
</evidence>
<evidence type="ECO:0000305" key="9"/>
<evidence type="ECO:0000312" key="10">
    <source>
        <dbReference type="EMBL" id="DAA12160.1"/>
    </source>
</evidence>
<evidence type="ECO:0000312" key="11">
    <source>
        <dbReference type="SGD" id="S000002727"/>
    </source>
</evidence>
<reference key="1">
    <citation type="journal article" date="1997" name="Nature">
        <title>The nucleotide sequence of Saccharomyces cerevisiae chromosome IV.</title>
        <authorList>
            <person name="Jacq C."/>
            <person name="Alt-Moerbe J."/>
            <person name="Andre B."/>
            <person name="Arnold W."/>
            <person name="Bahr A."/>
            <person name="Ballesta J.P.G."/>
            <person name="Bargues M."/>
            <person name="Baron L."/>
            <person name="Becker A."/>
            <person name="Biteau N."/>
            <person name="Bloecker H."/>
            <person name="Blugeon C."/>
            <person name="Boskovic J."/>
            <person name="Brandt P."/>
            <person name="Brueckner M."/>
            <person name="Buitrago M.J."/>
            <person name="Coster F."/>
            <person name="Delaveau T."/>
            <person name="del Rey F."/>
            <person name="Dujon B."/>
            <person name="Eide L.G."/>
            <person name="Garcia-Cantalejo J.M."/>
            <person name="Goffeau A."/>
            <person name="Gomez-Peris A."/>
            <person name="Granotier C."/>
            <person name="Hanemann V."/>
            <person name="Hankeln T."/>
            <person name="Hoheisel J.D."/>
            <person name="Jaeger W."/>
            <person name="Jimenez A."/>
            <person name="Jonniaux J.-L."/>
            <person name="Kraemer C."/>
            <person name="Kuester H."/>
            <person name="Laamanen P."/>
            <person name="Legros Y."/>
            <person name="Louis E.J."/>
            <person name="Moeller-Rieker S."/>
            <person name="Monnet A."/>
            <person name="Moro M."/>
            <person name="Mueller-Auer S."/>
            <person name="Nussbaumer B."/>
            <person name="Paricio N."/>
            <person name="Paulin L."/>
            <person name="Perea J."/>
            <person name="Perez-Alonso M."/>
            <person name="Perez-Ortin J.E."/>
            <person name="Pohl T.M."/>
            <person name="Prydz H."/>
            <person name="Purnelle B."/>
            <person name="Rasmussen S.W."/>
            <person name="Remacha M.A."/>
            <person name="Revuelta J.L."/>
            <person name="Rieger M."/>
            <person name="Salom D."/>
            <person name="Saluz H.P."/>
            <person name="Saiz J.E."/>
            <person name="Saren A.-M."/>
            <person name="Schaefer M."/>
            <person name="Scharfe M."/>
            <person name="Schmidt E.R."/>
            <person name="Schneider C."/>
            <person name="Scholler P."/>
            <person name="Schwarz S."/>
            <person name="Soler-Mira A."/>
            <person name="Urrestarazu L.A."/>
            <person name="Verhasselt P."/>
            <person name="Vissers S."/>
            <person name="Voet M."/>
            <person name="Volckaert G."/>
            <person name="Wagner G."/>
            <person name="Wambutt R."/>
            <person name="Wedler E."/>
            <person name="Wedler H."/>
            <person name="Woelfl S."/>
            <person name="Harris D.E."/>
            <person name="Bowman S."/>
            <person name="Brown D."/>
            <person name="Churcher C.M."/>
            <person name="Connor R."/>
            <person name="Dedman K."/>
            <person name="Gentles S."/>
            <person name="Hamlin N."/>
            <person name="Hunt S."/>
            <person name="Jones L."/>
            <person name="McDonald S."/>
            <person name="Murphy L.D."/>
            <person name="Niblett D."/>
            <person name="Odell C."/>
            <person name="Oliver K."/>
            <person name="Rajandream M.A."/>
            <person name="Richards C."/>
            <person name="Shore L."/>
            <person name="Walsh S.V."/>
            <person name="Barrell B.G."/>
            <person name="Dietrich F.S."/>
            <person name="Mulligan J.T."/>
            <person name="Allen E."/>
            <person name="Araujo R."/>
            <person name="Aviles E."/>
            <person name="Berno A."/>
            <person name="Carpenter J."/>
            <person name="Chen E."/>
            <person name="Cherry J.M."/>
            <person name="Chung E."/>
            <person name="Duncan M."/>
            <person name="Hunicke-Smith S."/>
            <person name="Hyman R.W."/>
            <person name="Komp C."/>
            <person name="Lashkari D."/>
            <person name="Lew H."/>
            <person name="Lin D."/>
            <person name="Mosedale D."/>
            <person name="Nakahara K."/>
            <person name="Namath A."/>
            <person name="Oefner P."/>
            <person name="Oh C."/>
            <person name="Petel F.X."/>
            <person name="Roberts D."/>
            <person name="Schramm S."/>
            <person name="Schroeder M."/>
            <person name="Shogren T."/>
            <person name="Shroff N."/>
            <person name="Winant A."/>
            <person name="Yelton M.A."/>
            <person name="Botstein D."/>
            <person name="Davis R.W."/>
            <person name="Johnston M."/>
            <person name="Andrews S."/>
            <person name="Brinkman R."/>
            <person name="Cooper J."/>
            <person name="Ding H."/>
            <person name="Du Z."/>
            <person name="Favello A."/>
            <person name="Fulton L."/>
            <person name="Gattung S."/>
            <person name="Greco T."/>
            <person name="Hallsworth K."/>
            <person name="Hawkins J."/>
            <person name="Hillier L.W."/>
            <person name="Jier M."/>
            <person name="Johnson D."/>
            <person name="Johnston L."/>
            <person name="Kirsten J."/>
            <person name="Kucaba T."/>
            <person name="Langston Y."/>
            <person name="Latreille P."/>
            <person name="Le T."/>
            <person name="Mardis E."/>
            <person name="Menezes S."/>
            <person name="Miller N."/>
            <person name="Nhan M."/>
            <person name="Pauley A."/>
            <person name="Peluso D."/>
            <person name="Rifkin L."/>
            <person name="Riles L."/>
            <person name="Taich A."/>
            <person name="Trevaskis E."/>
            <person name="Vignati D."/>
            <person name="Wilcox L."/>
            <person name="Wohldman P."/>
            <person name="Vaudin M."/>
            <person name="Wilson R."/>
            <person name="Waterston R."/>
            <person name="Albermann K."/>
            <person name="Hani J."/>
            <person name="Heumann K."/>
            <person name="Kleine K."/>
            <person name="Mewes H.-W."/>
            <person name="Zollner A."/>
            <person name="Zaccaria P."/>
        </authorList>
    </citation>
    <scope>NUCLEOTIDE SEQUENCE [LARGE SCALE GENOMIC DNA]</scope>
    <source>
        <strain>ATCC 204508 / S288c</strain>
    </source>
</reference>
<reference key="2">
    <citation type="journal article" date="2014" name="G3 (Bethesda)">
        <title>The reference genome sequence of Saccharomyces cerevisiae: Then and now.</title>
        <authorList>
            <person name="Engel S.R."/>
            <person name="Dietrich F.S."/>
            <person name="Fisk D.G."/>
            <person name="Binkley G."/>
            <person name="Balakrishnan R."/>
            <person name="Costanzo M.C."/>
            <person name="Dwight S.S."/>
            <person name="Hitz B.C."/>
            <person name="Karra K."/>
            <person name="Nash R.S."/>
            <person name="Weng S."/>
            <person name="Wong E.D."/>
            <person name="Lloyd P."/>
            <person name="Skrzypek M.S."/>
            <person name="Miyasato S.R."/>
            <person name="Simison M."/>
            <person name="Cherry J.M."/>
        </authorList>
    </citation>
    <scope>GENOME REANNOTATION</scope>
    <source>
        <strain>ATCC 204508 / S288c</strain>
    </source>
</reference>
<reference key="3">
    <citation type="journal article" date="2006" name="Proc. Natl. Acad. Sci. U.S.A.">
        <title>A global topology map of the Saccharomyces cerevisiae membrane proteome.</title>
        <authorList>
            <person name="Kim H."/>
            <person name="Melen K."/>
            <person name="Oesterberg M."/>
            <person name="von Heijne G."/>
        </authorList>
    </citation>
    <scope>TOPOLOGY [LARGE SCALE ANALYSIS]</scope>
    <source>
        <strain>ATCC 208353 / W303-1A</strain>
    </source>
</reference>
<reference key="4">
    <citation type="journal article" date="2015" name="J. Cell Biol.">
        <title>A conserved family of proteins facilitates nascent lipid droplet budding from the ER.</title>
        <authorList>
            <person name="Choudhary V."/>
            <person name="Ojha N."/>
            <person name="Golden A."/>
            <person name="Prinz W.A."/>
        </authorList>
    </citation>
    <scope>FUNCTION</scope>
    <scope>SUBCELLULAR LOCATION</scope>
</reference>
<reference key="5">
    <citation type="journal article" date="2017" name="Microb. Cell">
        <title>Fat storage-inducing transmembrane (FIT or FITM) proteins are related to lipid phosphatase/phosphotransferase enzymes.</title>
        <authorList>
            <person name="Hayes M."/>
            <person name="Choudhary V."/>
            <person name="Ojha N."/>
            <person name="Shin J.J."/>
            <person name="Han G.S."/>
            <person name="Carman G.M."/>
            <person name="Loewen C.J."/>
            <person name="Prinz W.A."/>
            <person name="Levine T."/>
        </authorList>
    </citation>
    <scope>FUNCTION</scope>
    <scope>SUBCELLULAR LOCATION</scope>
    <scope>MUTAGENESIS OF HIS-178 AND GLU-243</scope>
</reference>
<reference key="6">
    <citation type="journal article" date="2018" name="Curr. Biol.">
        <title>Architecture of lipid droplets in endoplasmic reticulum is determined by phospholipid intrinsic curvature.</title>
        <authorList>
            <person name="Choudhary V."/>
            <person name="Golani G."/>
            <person name="Joshi A.S."/>
            <person name="Cottier S."/>
            <person name="Schneiter R."/>
            <person name="Prinz W.A."/>
            <person name="Kozlov M.M."/>
        </authorList>
    </citation>
    <scope>FUNCTION</scope>
    <scope>SUBCELLULAR LOCATION</scope>
</reference>
<sequence>MIRQLNYWSRKAYLIYPFQVFVGALLSIVVSSETLNHQKETCALLKSSNIFNVIFAYKANQLWPFLFFSLAFLQIYFHYLARMDILPLPISSTETSSSYLTYTNHWPLLKNRIISIMITQYACKFVLKYLLLFLNFQFIDHVFIWTGGECSSGSKTTSAEKCRLENGKWDGGFDISGHFCFLVSISMILWMELHLFSRFVQAEDMFWVVNKWVRACLAIVCAVLVIWICILWVTAIYYHTILEKVLGCLMGFICPVFIYHILPKIGILHNYLYL</sequence>
<organism>
    <name type="scientific">Saccharomyces cerevisiae (strain ATCC 204508 / S288c)</name>
    <name type="common">Baker's yeast</name>
    <dbReference type="NCBI Taxonomy" id="559292"/>
    <lineage>
        <taxon>Eukaryota</taxon>
        <taxon>Fungi</taxon>
        <taxon>Dikarya</taxon>
        <taxon>Ascomycota</taxon>
        <taxon>Saccharomycotina</taxon>
        <taxon>Saccharomycetes</taxon>
        <taxon>Saccharomycetales</taxon>
        <taxon>Saccharomycetaceae</taxon>
        <taxon>Saccharomyces</taxon>
    </lineage>
</organism>